<feature type="chain" id="PRO_1000117556" description="Elongation factor Ts">
    <location>
        <begin position="1"/>
        <end position="204"/>
    </location>
</feature>
<feature type="region of interest" description="Involved in Mg(2+) ion dislocation from EF-Tu" evidence="1">
    <location>
        <begin position="80"/>
        <end position="83"/>
    </location>
</feature>
<evidence type="ECO:0000255" key="1">
    <source>
        <dbReference type="HAMAP-Rule" id="MF_00050"/>
    </source>
</evidence>
<organism>
    <name type="scientific">Caldicellulosiruptor bescii (strain ATCC BAA-1888 / DSM 6725 / KCTC 15123 / Z-1320)</name>
    <name type="common">Anaerocellum thermophilum</name>
    <dbReference type="NCBI Taxonomy" id="521460"/>
    <lineage>
        <taxon>Bacteria</taxon>
        <taxon>Bacillati</taxon>
        <taxon>Bacillota</taxon>
        <taxon>Bacillota incertae sedis</taxon>
        <taxon>Caldicellulosiruptorales</taxon>
        <taxon>Caldicellulosiruptoraceae</taxon>
        <taxon>Caldicellulosiruptor</taxon>
    </lineage>
</organism>
<keyword id="KW-0963">Cytoplasm</keyword>
<keyword id="KW-0251">Elongation factor</keyword>
<keyword id="KW-0648">Protein biosynthesis</keyword>
<gene>
    <name evidence="1" type="primary">tsf</name>
    <name type="ordered locus">Athe_1815</name>
</gene>
<comment type="function">
    <text evidence="1">Associates with the EF-Tu.GDP complex and induces the exchange of GDP to GTP. It remains bound to the aminoacyl-tRNA.EF-Tu.GTP complex up to the GTP hydrolysis stage on the ribosome.</text>
</comment>
<comment type="subcellular location">
    <subcellularLocation>
        <location evidence="1">Cytoplasm</location>
    </subcellularLocation>
</comment>
<comment type="similarity">
    <text evidence="1">Belongs to the EF-Ts family.</text>
</comment>
<dbReference type="EMBL" id="CP001393">
    <property type="protein sequence ID" value="ACM60908.1"/>
    <property type="molecule type" value="Genomic_DNA"/>
</dbReference>
<dbReference type="RefSeq" id="WP_015908205.1">
    <property type="nucleotide sequence ID" value="NC_012034.1"/>
</dbReference>
<dbReference type="SMR" id="B9MKQ0"/>
<dbReference type="STRING" id="521460.Athe_1815"/>
<dbReference type="GeneID" id="31773172"/>
<dbReference type="KEGG" id="ate:Athe_1815"/>
<dbReference type="eggNOG" id="COG0264">
    <property type="taxonomic scope" value="Bacteria"/>
</dbReference>
<dbReference type="HOGENOM" id="CLU_047155_1_1_9"/>
<dbReference type="Proteomes" id="UP000007723">
    <property type="component" value="Chromosome"/>
</dbReference>
<dbReference type="GO" id="GO:0005737">
    <property type="term" value="C:cytoplasm"/>
    <property type="evidence" value="ECO:0007669"/>
    <property type="project" value="UniProtKB-SubCell"/>
</dbReference>
<dbReference type="GO" id="GO:0003746">
    <property type="term" value="F:translation elongation factor activity"/>
    <property type="evidence" value="ECO:0007669"/>
    <property type="project" value="UniProtKB-UniRule"/>
</dbReference>
<dbReference type="CDD" id="cd14275">
    <property type="entry name" value="UBA_EF-Ts"/>
    <property type="match status" value="1"/>
</dbReference>
<dbReference type="FunFam" id="1.10.286.20:FF:000001">
    <property type="entry name" value="Elongation factor Ts"/>
    <property type="match status" value="1"/>
</dbReference>
<dbReference type="FunFam" id="1.10.8.10:FF:000001">
    <property type="entry name" value="Elongation factor Ts"/>
    <property type="match status" value="1"/>
</dbReference>
<dbReference type="Gene3D" id="1.10.286.20">
    <property type="match status" value="1"/>
</dbReference>
<dbReference type="Gene3D" id="1.10.8.10">
    <property type="entry name" value="DNA helicase RuvA subunit, C-terminal domain"/>
    <property type="match status" value="1"/>
</dbReference>
<dbReference type="Gene3D" id="3.30.479.20">
    <property type="entry name" value="Elongation factor Ts, dimerisation domain"/>
    <property type="match status" value="1"/>
</dbReference>
<dbReference type="HAMAP" id="MF_00050">
    <property type="entry name" value="EF_Ts"/>
    <property type="match status" value="1"/>
</dbReference>
<dbReference type="InterPro" id="IPR036402">
    <property type="entry name" value="EF-Ts_dimer_sf"/>
</dbReference>
<dbReference type="InterPro" id="IPR001816">
    <property type="entry name" value="Transl_elong_EFTs/EF1B"/>
</dbReference>
<dbReference type="InterPro" id="IPR014039">
    <property type="entry name" value="Transl_elong_EFTs/EF1B_dimer"/>
</dbReference>
<dbReference type="InterPro" id="IPR018101">
    <property type="entry name" value="Transl_elong_Ts_CS"/>
</dbReference>
<dbReference type="InterPro" id="IPR009060">
    <property type="entry name" value="UBA-like_sf"/>
</dbReference>
<dbReference type="NCBIfam" id="TIGR00116">
    <property type="entry name" value="tsf"/>
    <property type="match status" value="2"/>
</dbReference>
<dbReference type="PANTHER" id="PTHR11741">
    <property type="entry name" value="ELONGATION FACTOR TS"/>
    <property type="match status" value="1"/>
</dbReference>
<dbReference type="PANTHER" id="PTHR11741:SF0">
    <property type="entry name" value="ELONGATION FACTOR TS, MITOCHONDRIAL"/>
    <property type="match status" value="1"/>
</dbReference>
<dbReference type="Pfam" id="PF00889">
    <property type="entry name" value="EF_TS"/>
    <property type="match status" value="1"/>
</dbReference>
<dbReference type="SUPFAM" id="SSF54713">
    <property type="entry name" value="Elongation factor Ts (EF-Ts), dimerisation domain"/>
    <property type="match status" value="1"/>
</dbReference>
<dbReference type="SUPFAM" id="SSF46934">
    <property type="entry name" value="UBA-like"/>
    <property type="match status" value="1"/>
</dbReference>
<dbReference type="PROSITE" id="PS01126">
    <property type="entry name" value="EF_TS_1"/>
    <property type="match status" value="1"/>
</dbReference>
<dbReference type="PROSITE" id="PS01127">
    <property type="entry name" value="EF_TS_2"/>
    <property type="match status" value="1"/>
</dbReference>
<name>EFTS_CALBD</name>
<accession>B9MKQ0</accession>
<proteinExistence type="inferred from homology"/>
<reference key="1">
    <citation type="submission" date="2009-01" db="EMBL/GenBank/DDBJ databases">
        <title>Complete sequence of chromosome of Caldicellulosiruptor becscii DSM 6725.</title>
        <authorList>
            <person name="Lucas S."/>
            <person name="Copeland A."/>
            <person name="Lapidus A."/>
            <person name="Glavina del Rio T."/>
            <person name="Tice H."/>
            <person name="Bruce D."/>
            <person name="Goodwin L."/>
            <person name="Pitluck S."/>
            <person name="Sims D."/>
            <person name="Meincke L."/>
            <person name="Brettin T."/>
            <person name="Detter J.C."/>
            <person name="Han C."/>
            <person name="Larimer F."/>
            <person name="Land M."/>
            <person name="Hauser L."/>
            <person name="Kyrpides N."/>
            <person name="Ovchinnikova G."/>
            <person name="Kataeva I."/>
            <person name="Adams M.W.W."/>
        </authorList>
    </citation>
    <scope>NUCLEOTIDE SEQUENCE [LARGE SCALE GENOMIC DNA]</scope>
    <source>
        <strain>ATCC BAA-1888 / DSM 6725 / KCTC 15123 / Z-1320</strain>
    </source>
</reference>
<protein>
    <recommendedName>
        <fullName evidence="1">Elongation factor Ts</fullName>
        <shortName evidence="1">EF-Ts</shortName>
    </recommendedName>
</protein>
<sequence length="204" mass="22966">MITAEMVKELREKTGAGMMDCKKALEDAGGDMDKAIELLRERGLAKAAKKASRVAAEGIVESYIHGNGRIGVLVEINCETDFVARNEEFRQFAKDIAMQIAAANPKYVSREEVPLDVIEKEKTILRQQALNEGKPENVVDRIVEGRLEKFFEEVCLLEQPWIKNPDMKIKDLLTEKIAKIGENIVIRRFARFERGEGIEKAASC</sequence>